<organism>
    <name type="scientific">Xenopus laevis</name>
    <name type="common">African clawed frog</name>
    <dbReference type="NCBI Taxonomy" id="8355"/>
    <lineage>
        <taxon>Eukaryota</taxon>
        <taxon>Metazoa</taxon>
        <taxon>Chordata</taxon>
        <taxon>Craniata</taxon>
        <taxon>Vertebrata</taxon>
        <taxon>Euteleostomi</taxon>
        <taxon>Amphibia</taxon>
        <taxon>Batrachia</taxon>
        <taxon>Anura</taxon>
        <taxon>Pipoidea</taxon>
        <taxon>Pipidae</taxon>
        <taxon>Xenopodinae</taxon>
        <taxon>Xenopus</taxon>
        <taxon>Xenopus</taxon>
    </lineage>
</organism>
<gene>
    <name type="primary">ttyh3</name>
</gene>
<sequence length="522" mass="58981">MAAAISYTPPWWVNLLHRLPHLNLQWESLNGDFRPEDPDYQQSLMLLACVALSCLALDLLFLLFYSFWFCCRHRKTEENTNADCCCTVWCVIVATLVCSAGIAVGFYGNGETSDGIHRVTYSIRHVNRTMAGIHDRVSDTTTSLNQTVEPCLQNLEVMFTKQTDYLRIVQRLQSLLYTLVQQTSEIPFWKNHYLLDEFAAQVDLFDWYRWLGYLGLLLFHVFICLLVLFGLIRNSKGTLICVCFLGMMALIISWASMGLELAVAVGSSDFCVNPDTFVSKMVEEKSVLRADILNYYLVCNTGSPNPFQQMLSSGHKALVEMQDDVRDLLRSAVKEYPNSKDYLVCIQGVLNSTEINLQHLTALVDCRGLHLDYVQSLTGFCYDGVEGLIYLVLFSFVTALMFSSIVCSVPHTWQQRRANYEEGDEETTTPGTRQTHDNLYRVHMPSLYSCGSSYGSETSIPAAAHTVSNAPVTEYMSQNANFQNPRCENTPLIGRESPPPSYTSSMRAKYLATNRPETDPVH</sequence>
<evidence type="ECO:0000250" key="1">
    <source>
        <dbReference type="UniProtKB" id="Q6P5F7"/>
    </source>
</evidence>
<evidence type="ECO:0000250" key="2">
    <source>
        <dbReference type="UniProtKB" id="Q9C0H2"/>
    </source>
</evidence>
<evidence type="ECO:0000255" key="3"/>
<evidence type="ECO:0000256" key="4">
    <source>
        <dbReference type="SAM" id="MobiDB-lite"/>
    </source>
</evidence>
<evidence type="ECO:0000305" key="5"/>
<accession>Q6GPA5</accession>
<name>TTYH3_XENLA</name>
<keyword id="KW-0106">Calcium</keyword>
<keyword id="KW-1003">Cell membrane</keyword>
<keyword id="KW-0868">Chloride</keyword>
<keyword id="KW-0869">Chloride channel</keyword>
<keyword id="KW-1015">Disulfide bond</keyword>
<keyword id="KW-0325">Glycoprotein</keyword>
<keyword id="KW-0407">Ion channel</keyword>
<keyword id="KW-0406">Ion transport</keyword>
<keyword id="KW-0472">Membrane</keyword>
<keyword id="KW-0479">Metal-binding</keyword>
<keyword id="KW-1185">Reference proteome</keyword>
<keyword id="KW-0812">Transmembrane</keyword>
<keyword id="KW-1133">Transmembrane helix</keyword>
<keyword id="KW-0813">Transport</keyword>
<feature type="chain" id="PRO_0000312254" description="Protein tweety homolog 3">
    <location>
        <begin position="1"/>
        <end position="522"/>
    </location>
</feature>
<feature type="topological domain" description="Extracellular" evidence="2">
    <location>
        <begin position="1"/>
        <end position="43"/>
    </location>
</feature>
<feature type="transmembrane region" description="Helical; Name=1" evidence="3">
    <location>
        <begin position="44"/>
        <end position="64"/>
    </location>
</feature>
<feature type="topological domain" description="Cytoplasmic" evidence="2">
    <location>
        <begin position="65"/>
        <end position="87"/>
    </location>
</feature>
<feature type="transmembrane region" description="Helical; Name=2" evidence="3">
    <location>
        <begin position="88"/>
        <end position="108"/>
    </location>
</feature>
<feature type="topological domain" description="Extracellular" evidence="2">
    <location>
        <begin position="109"/>
        <end position="211"/>
    </location>
</feature>
<feature type="transmembrane region" description="Helical; Name=3" evidence="3">
    <location>
        <begin position="212"/>
        <end position="232"/>
    </location>
</feature>
<feature type="topological domain" description="Cytoplasmic" evidence="2">
    <location>
        <begin position="233"/>
        <end position="238"/>
    </location>
</feature>
<feature type="transmembrane region" description="Helical; Name=4" evidence="3">
    <location>
        <begin position="239"/>
        <end position="259"/>
    </location>
</feature>
<feature type="topological domain" description="Extracellular" evidence="2">
    <location>
        <begin position="260"/>
        <end position="386"/>
    </location>
</feature>
<feature type="transmembrane region" description="Helical; Name=5" evidence="3">
    <location>
        <begin position="387"/>
        <end position="407"/>
    </location>
</feature>
<feature type="topological domain" description="Cytoplasmic" evidence="2">
    <location>
        <begin position="408"/>
        <end position="522"/>
    </location>
</feature>
<feature type="region of interest" description="Disordered" evidence="4">
    <location>
        <begin position="483"/>
        <end position="522"/>
    </location>
</feature>
<feature type="binding site" evidence="1">
    <location>
        <position position="111"/>
    </location>
    <ligand>
        <name>Ca(2+)</name>
        <dbReference type="ChEBI" id="CHEBI:29108"/>
    </ligand>
</feature>
<feature type="binding site" evidence="1">
    <location>
        <position position="114"/>
    </location>
    <ligand>
        <name>Ca(2+)</name>
        <dbReference type="ChEBI" id="CHEBI:29108"/>
    </ligand>
</feature>
<feature type="glycosylation site" description="N-linked (GlcNAc...) asparagine" evidence="3">
    <location>
        <position position="127"/>
    </location>
</feature>
<feature type="glycosylation site" description="N-linked (GlcNAc...) asparagine" evidence="3">
    <location>
        <position position="145"/>
    </location>
</feature>
<feature type="glycosylation site" description="N-linked (GlcNAc...) asparagine" evidence="3">
    <location>
        <position position="351"/>
    </location>
</feature>
<feature type="disulfide bond" evidence="2">
    <location>
        <begin position="271"/>
        <end position="381"/>
    </location>
</feature>
<feature type="disulfide bond" evidence="2">
    <location>
        <begin position="299"/>
        <end position="366"/>
    </location>
</feature>
<reference key="1">
    <citation type="submission" date="2004-06" db="EMBL/GenBank/DDBJ databases">
        <authorList>
            <consortium name="NIH - Xenopus Gene Collection (XGC) project"/>
        </authorList>
    </citation>
    <scope>NUCLEOTIDE SEQUENCE [LARGE SCALE MRNA]</scope>
    <source>
        <tissue>Embryo</tissue>
    </source>
</reference>
<comment type="function">
    <text evidence="1 2">May act as a calcium-independent, swelling-dependent volume-regulated anion channel (VRAC-swell) which plays a pivotal role in the process of regulatory volume decrease (RVD) in the brain through the efflux of anions like chloride and organic osmolytes like glutamate. Probable large-conductance Ca(2+)-activated chloride channel.</text>
</comment>
<comment type="catalytic activity">
    <reaction evidence="1">
        <text>chloride(in) = chloride(out)</text>
        <dbReference type="Rhea" id="RHEA:29823"/>
        <dbReference type="ChEBI" id="CHEBI:17996"/>
    </reaction>
</comment>
<comment type="catalytic activity">
    <reaction evidence="1">
        <text>L-glutamate(out) = L-glutamate(in)</text>
        <dbReference type="Rhea" id="RHEA:66336"/>
        <dbReference type="ChEBI" id="CHEBI:29985"/>
    </reaction>
    <physiologicalReaction direction="right-to-left" evidence="1">
        <dbReference type="Rhea" id="RHEA:66338"/>
    </physiologicalReaction>
</comment>
<comment type="subunit">
    <text evidence="1">Homotetramer; disulfide-linked. Forms cis-homodimers in the presence of Ca(2+).</text>
</comment>
<comment type="subcellular location">
    <subcellularLocation>
        <location evidence="1">Cell membrane</location>
        <topology evidence="3">Multi-pass membrane protein</topology>
    </subcellularLocation>
</comment>
<comment type="similarity">
    <text evidence="5">Belongs to the tweety family.</text>
</comment>
<protein>
    <recommendedName>
        <fullName>Protein tweety homolog 3</fullName>
    </recommendedName>
    <alternativeName>
        <fullName evidence="1">Volume-regulated anion channel subunit ttyh3</fullName>
    </alternativeName>
</protein>
<proteinExistence type="evidence at transcript level"/>
<dbReference type="EMBL" id="BC073236">
    <property type="protein sequence ID" value="AAH73236.1"/>
    <property type="molecule type" value="mRNA"/>
</dbReference>
<dbReference type="RefSeq" id="NP_001085713.1">
    <property type="nucleotide sequence ID" value="NM_001092244.1"/>
</dbReference>
<dbReference type="SMR" id="Q6GPA5"/>
<dbReference type="GlyCosmos" id="Q6GPA5">
    <property type="glycosylation" value="3 sites, No reported glycans"/>
</dbReference>
<dbReference type="GeneID" id="444139"/>
<dbReference type="KEGG" id="xla:444139"/>
<dbReference type="AGR" id="Xenbase:XB-GENE-941475"/>
<dbReference type="CTD" id="444139"/>
<dbReference type="Xenbase" id="XB-GENE-941475">
    <property type="gene designation" value="ttyh3.S"/>
</dbReference>
<dbReference type="OMA" id="PETNSIH"/>
<dbReference type="OrthoDB" id="187568at2759"/>
<dbReference type="Proteomes" id="UP000186698">
    <property type="component" value="Chromosome 9_10S"/>
</dbReference>
<dbReference type="Bgee" id="444139">
    <property type="expression patterns" value="Expressed in spleen and 19 other cell types or tissues"/>
</dbReference>
<dbReference type="GO" id="GO:0034707">
    <property type="term" value="C:chloride channel complex"/>
    <property type="evidence" value="ECO:0007669"/>
    <property type="project" value="UniProtKB-KW"/>
</dbReference>
<dbReference type="GO" id="GO:0005886">
    <property type="term" value="C:plasma membrane"/>
    <property type="evidence" value="ECO:0000250"/>
    <property type="project" value="UniProtKB"/>
</dbReference>
<dbReference type="GO" id="GO:0005509">
    <property type="term" value="F:calcium ion binding"/>
    <property type="evidence" value="ECO:0000250"/>
    <property type="project" value="UniProtKB"/>
</dbReference>
<dbReference type="GO" id="GO:0005229">
    <property type="term" value="F:intracellularly calcium-gated chloride channel activity"/>
    <property type="evidence" value="ECO:0000318"/>
    <property type="project" value="GO_Central"/>
</dbReference>
<dbReference type="GO" id="GO:0072320">
    <property type="term" value="F:volume-sensitive chloride channel activity"/>
    <property type="evidence" value="ECO:0000250"/>
    <property type="project" value="UniProtKB"/>
</dbReference>
<dbReference type="GO" id="GO:0015813">
    <property type="term" value="P:L-glutamate transmembrane transport"/>
    <property type="evidence" value="ECO:0000250"/>
    <property type="project" value="UniProtKB"/>
</dbReference>
<dbReference type="CDD" id="cd07912">
    <property type="entry name" value="Tweety_N"/>
    <property type="match status" value="1"/>
</dbReference>
<dbReference type="InterPro" id="IPR006990">
    <property type="entry name" value="Tweety"/>
</dbReference>
<dbReference type="PANTHER" id="PTHR12424:SF4">
    <property type="entry name" value="PROTEIN TWEETY HOMOLOG 3"/>
    <property type="match status" value="1"/>
</dbReference>
<dbReference type="PANTHER" id="PTHR12424">
    <property type="entry name" value="TWEETY-RELATED"/>
    <property type="match status" value="1"/>
</dbReference>
<dbReference type="Pfam" id="PF04906">
    <property type="entry name" value="Tweety"/>
    <property type="match status" value="1"/>
</dbReference>